<proteinExistence type="inferred from homology"/>
<protein>
    <recommendedName>
        <fullName evidence="1">1-deoxy-D-xylulose 5-phosphate reductoisomerase</fullName>
        <shortName evidence="1">DXP reductoisomerase</shortName>
        <ecNumber evidence="1">1.1.1.267</ecNumber>
    </recommendedName>
    <alternativeName>
        <fullName evidence="1">1-deoxyxylulose-5-phosphate reductoisomerase</fullName>
    </alternativeName>
    <alternativeName>
        <fullName evidence="1">2-C-methyl-D-erythritol 4-phosphate synthase</fullName>
    </alternativeName>
</protein>
<name>DXR_PARDP</name>
<evidence type="ECO:0000255" key="1">
    <source>
        <dbReference type="HAMAP-Rule" id="MF_00183"/>
    </source>
</evidence>
<sequence>MRSISVLGATGSVGESAFDLLMGAGGPERFRTVALTGGANVARLAQMARALRAELAVTAWPERLADLRAALAGSGIEAAAGPQAVAEAAARPADWTLSAIVGAAGLPPGLEVLNRGGTLALANKETLVAAGPLVMARARETGARILPVDSEHSAIFQALHGENLDSVEHVTITASGGAFRDWPLERLARATVAEASRHPNWDMGQRITIDSASMFNKALEVIEAHEFFGLGVDRLRVLVHPQSIIHAMVTHRDGGSIAHLGAPDMRHAIGYALNWPARAALPVPALDLAALGSLTFAQPDEVRWPALRLAREAIGAGGAAGAVLNAAKEQALDDFIAGRIRFTDMAPAVEHALALAAREAGFAQSPRDLGEVLHWDDFARRAAAQWQGAA</sequence>
<keyword id="KW-0414">Isoprene biosynthesis</keyword>
<keyword id="KW-0464">Manganese</keyword>
<keyword id="KW-0479">Metal-binding</keyword>
<keyword id="KW-0521">NADP</keyword>
<keyword id="KW-0560">Oxidoreductase</keyword>
<keyword id="KW-1185">Reference proteome</keyword>
<organism>
    <name type="scientific">Paracoccus denitrificans (strain Pd 1222)</name>
    <dbReference type="NCBI Taxonomy" id="318586"/>
    <lineage>
        <taxon>Bacteria</taxon>
        <taxon>Pseudomonadati</taxon>
        <taxon>Pseudomonadota</taxon>
        <taxon>Alphaproteobacteria</taxon>
        <taxon>Rhodobacterales</taxon>
        <taxon>Paracoccaceae</taxon>
        <taxon>Paracoccus</taxon>
    </lineage>
</organism>
<gene>
    <name evidence="1" type="primary">dxr</name>
    <name type="ordered locus">Pden_3997</name>
</gene>
<dbReference type="EC" id="1.1.1.267" evidence="1"/>
<dbReference type="EMBL" id="CP000490">
    <property type="protein sequence ID" value="ABL72063.1"/>
    <property type="molecule type" value="Genomic_DNA"/>
</dbReference>
<dbReference type="RefSeq" id="WP_011750231.1">
    <property type="nucleotide sequence ID" value="NC_008687.1"/>
</dbReference>
<dbReference type="SMR" id="A1B969"/>
<dbReference type="STRING" id="318586.Pden_3997"/>
<dbReference type="EnsemblBacteria" id="ABL72063">
    <property type="protein sequence ID" value="ABL72063"/>
    <property type="gene ID" value="Pden_3997"/>
</dbReference>
<dbReference type="GeneID" id="93453658"/>
<dbReference type="KEGG" id="pde:Pden_3997"/>
<dbReference type="eggNOG" id="COG0743">
    <property type="taxonomic scope" value="Bacteria"/>
</dbReference>
<dbReference type="HOGENOM" id="CLU_035714_4_0_5"/>
<dbReference type="OrthoDB" id="9806546at2"/>
<dbReference type="UniPathway" id="UPA00056">
    <property type="reaction ID" value="UER00092"/>
</dbReference>
<dbReference type="Proteomes" id="UP000000361">
    <property type="component" value="Chromosome 2"/>
</dbReference>
<dbReference type="GO" id="GO:0030604">
    <property type="term" value="F:1-deoxy-D-xylulose-5-phosphate reductoisomerase activity"/>
    <property type="evidence" value="ECO:0007669"/>
    <property type="project" value="UniProtKB-UniRule"/>
</dbReference>
<dbReference type="GO" id="GO:0030145">
    <property type="term" value="F:manganese ion binding"/>
    <property type="evidence" value="ECO:0007669"/>
    <property type="project" value="TreeGrafter"/>
</dbReference>
<dbReference type="GO" id="GO:0070402">
    <property type="term" value="F:NADPH binding"/>
    <property type="evidence" value="ECO:0007669"/>
    <property type="project" value="InterPro"/>
</dbReference>
<dbReference type="GO" id="GO:0051484">
    <property type="term" value="P:isopentenyl diphosphate biosynthetic process, methylerythritol 4-phosphate pathway involved in terpenoid biosynthetic process"/>
    <property type="evidence" value="ECO:0007669"/>
    <property type="project" value="TreeGrafter"/>
</dbReference>
<dbReference type="FunFam" id="3.40.50.720:FF:000045">
    <property type="entry name" value="1-deoxy-D-xylulose 5-phosphate reductoisomerase"/>
    <property type="match status" value="1"/>
</dbReference>
<dbReference type="Gene3D" id="1.10.1740.10">
    <property type="match status" value="1"/>
</dbReference>
<dbReference type="Gene3D" id="3.40.50.720">
    <property type="entry name" value="NAD(P)-binding Rossmann-like Domain"/>
    <property type="match status" value="1"/>
</dbReference>
<dbReference type="HAMAP" id="MF_00183">
    <property type="entry name" value="DXP_reductoisom"/>
    <property type="match status" value="1"/>
</dbReference>
<dbReference type="InterPro" id="IPR003821">
    <property type="entry name" value="DXP_reductoisomerase"/>
</dbReference>
<dbReference type="InterPro" id="IPR013644">
    <property type="entry name" value="DXP_reductoisomerase_C"/>
</dbReference>
<dbReference type="InterPro" id="IPR013512">
    <property type="entry name" value="DXP_reductoisomerase_N"/>
</dbReference>
<dbReference type="InterPro" id="IPR026877">
    <property type="entry name" value="DXPR_C"/>
</dbReference>
<dbReference type="InterPro" id="IPR036169">
    <property type="entry name" value="DXPR_C_sf"/>
</dbReference>
<dbReference type="InterPro" id="IPR036291">
    <property type="entry name" value="NAD(P)-bd_dom_sf"/>
</dbReference>
<dbReference type="NCBIfam" id="TIGR00243">
    <property type="entry name" value="Dxr"/>
    <property type="match status" value="1"/>
</dbReference>
<dbReference type="PANTHER" id="PTHR30525">
    <property type="entry name" value="1-DEOXY-D-XYLULOSE 5-PHOSPHATE REDUCTOISOMERASE"/>
    <property type="match status" value="1"/>
</dbReference>
<dbReference type="PANTHER" id="PTHR30525:SF0">
    <property type="entry name" value="1-DEOXY-D-XYLULOSE 5-PHOSPHATE REDUCTOISOMERASE, CHLOROPLASTIC"/>
    <property type="match status" value="1"/>
</dbReference>
<dbReference type="Pfam" id="PF08436">
    <property type="entry name" value="DXP_redisom_C"/>
    <property type="match status" value="1"/>
</dbReference>
<dbReference type="Pfam" id="PF02670">
    <property type="entry name" value="DXP_reductoisom"/>
    <property type="match status" value="1"/>
</dbReference>
<dbReference type="Pfam" id="PF13288">
    <property type="entry name" value="DXPR_C"/>
    <property type="match status" value="1"/>
</dbReference>
<dbReference type="PIRSF" id="PIRSF006205">
    <property type="entry name" value="Dxp_reductismrs"/>
    <property type="match status" value="1"/>
</dbReference>
<dbReference type="SUPFAM" id="SSF69055">
    <property type="entry name" value="1-deoxy-D-xylulose-5-phosphate reductoisomerase, C-terminal domain"/>
    <property type="match status" value="1"/>
</dbReference>
<dbReference type="SUPFAM" id="SSF55347">
    <property type="entry name" value="Glyceraldehyde-3-phosphate dehydrogenase-like, C-terminal domain"/>
    <property type="match status" value="1"/>
</dbReference>
<dbReference type="SUPFAM" id="SSF51735">
    <property type="entry name" value="NAD(P)-binding Rossmann-fold domains"/>
    <property type="match status" value="1"/>
</dbReference>
<feature type="chain" id="PRO_1000124105" description="1-deoxy-D-xylulose 5-phosphate reductoisomerase">
    <location>
        <begin position="1"/>
        <end position="390"/>
    </location>
</feature>
<feature type="binding site" evidence="1">
    <location>
        <position position="10"/>
    </location>
    <ligand>
        <name>NADPH</name>
        <dbReference type="ChEBI" id="CHEBI:57783"/>
    </ligand>
</feature>
<feature type="binding site" evidence="1">
    <location>
        <position position="11"/>
    </location>
    <ligand>
        <name>NADPH</name>
        <dbReference type="ChEBI" id="CHEBI:57783"/>
    </ligand>
</feature>
<feature type="binding site" evidence="1">
    <location>
        <position position="12"/>
    </location>
    <ligand>
        <name>NADPH</name>
        <dbReference type="ChEBI" id="CHEBI:57783"/>
    </ligand>
</feature>
<feature type="binding site" evidence="1">
    <location>
        <position position="13"/>
    </location>
    <ligand>
        <name>NADPH</name>
        <dbReference type="ChEBI" id="CHEBI:57783"/>
    </ligand>
</feature>
<feature type="binding site" evidence="1">
    <location>
        <position position="38"/>
    </location>
    <ligand>
        <name>NADPH</name>
        <dbReference type="ChEBI" id="CHEBI:57783"/>
    </ligand>
</feature>
<feature type="binding site" evidence="1">
    <location>
        <position position="40"/>
    </location>
    <ligand>
        <name>NADPH</name>
        <dbReference type="ChEBI" id="CHEBI:57783"/>
    </ligand>
</feature>
<feature type="binding site" evidence="1">
    <location>
        <position position="123"/>
    </location>
    <ligand>
        <name>NADPH</name>
        <dbReference type="ChEBI" id="CHEBI:57783"/>
    </ligand>
</feature>
<feature type="binding site" evidence="1">
    <location>
        <position position="124"/>
    </location>
    <ligand>
        <name>1-deoxy-D-xylulose 5-phosphate</name>
        <dbReference type="ChEBI" id="CHEBI:57792"/>
    </ligand>
</feature>
<feature type="binding site" evidence="1">
    <location>
        <position position="125"/>
    </location>
    <ligand>
        <name>NADPH</name>
        <dbReference type="ChEBI" id="CHEBI:57783"/>
    </ligand>
</feature>
<feature type="binding site" evidence="1">
    <location>
        <position position="149"/>
    </location>
    <ligand>
        <name>Mn(2+)</name>
        <dbReference type="ChEBI" id="CHEBI:29035"/>
    </ligand>
</feature>
<feature type="binding site" evidence="1">
    <location>
        <position position="150"/>
    </location>
    <ligand>
        <name>1-deoxy-D-xylulose 5-phosphate</name>
        <dbReference type="ChEBI" id="CHEBI:57792"/>
    </ligand>
</feature>
<feature type="binding site" evidence="1">
    <location>
        <position position="151"/>
    </location>
    <ligand>
        <name>1-deoxy-D-xylulose 5-phosphate</name>
        <dbReference type="ChEBI" id="CHEBI:57792"/>
    </ligand>
</feature>
<feature type="binding site" evidence="1">
    <location>
        <position position="151"/>
    </location>
    <ligand>
        <name>Mn(2+)</name>
        <dbReference type="ChEBI" id="CHEBI:29035"/>
    </ligand>
</feature>
<feature type="binding site" evidence="1">
    <location>
        <position position="175"/>
    </location>
    <ligand>
        <name>1-deoxy-D-xylulose 5-phosphate</name>
        <dbReference type="ChEBI" id="CHEBI:57792"/>
    </ligand>
</feature>
<feature type="binding site" evidence="1">
    <location>
        <position position="198"/>
    </location>
    <ligand>
        <name>1-deoxy-D-xylulose 5-phosphate</name>
        <dbReference type="ChEBI" id="CHEBI:57792"/>
    </ligand>
</feature>
<feature type="binding site" evidence="1">
    <location>
        <position position="204"/>
    </location>
    <ligand>
        <name>NADPH</name>
        <dbReference type="ChEBI" id="CHEBI:57783"/>
    </ligand>
</feature>
<feature type="binding site" evidence="1">
    <location>
        <position position="211"/>
    </location>
    <ligand>
        <name>1-deoxy-D-xylulose 5-phosphate</name>
        <dbReference type="ChEBI" id="CHEBI:57792"/>
    </ligand>
</feature>
<feature type="binding site" evidence="1">
    <location>
        <position position="216"/>
    </location>
    <ligand>
        <name>1-deoxy-D-xylulose 5-phosphate</name>
        <dbReference type="ChEBI" id="CHEBI:57792"/>
    </ligand>
</feature>
<feature type="binding site" evidence="1">
    <location>
        <position position="217"/>
    </location>
    <ligand>
        <name>1-deoxy-D-xylulose 5-phosphate</name>
        <dbReference type="ChEBI" id="CHEBI:57792"/>
    </ligand>
</feature>
<feature type="binding site" evidence="1">
    <location>
        <position position="220"/>
    </location>
    <ligand>
        <name>1-deoxy-D-xylulose 5-phosphate</name>
        <dbReference type="ChEBI" id="CHEBI:57792"/>
    </ligand>
</feature>
<feature type="binding site" evidence="1">
    <location>
        <position position="220"/>
    </location>
    <ligand>
        <name>Mn(2+)</name>
        <dbReference type="ChEBI" id="CHEBI:29035"/>
    </ligand>
</feature>
<accession>A1B969</accession>
<comment type="function">
    <text evidence="1">Catalyzes the NADPH-dependent rearrangement and reduction of 1-deoxy-D-xylulose-5-phosphate (DXP) to 2-C-methyl-D-erythritol 4-phosphate (MEP).</text>
</comment>
<comment type="catalytic activity">
    <reaction evidence="1">
        <text>2-C-methyl-D-erythritol 4-phosphate + NADP(+) = 1-deoxy-D-xylulose 5-phosphate + NADPH + H(+)</text>
        <dbReference type="Rhea" id="RHEA:13717"/>
        <dbReference type="ChEBI" id="CHEBI:15378"/>
        <dbReference type="ChEBI" id="CHEBI:57783"/>
        <dbReference type="ChEBI" id="CHEBI:57792"/>
        <dbReference type="ChEBI" id="CHEBI:58262"/>
        <dbReference type="ChEBI" id="CHEBI:58349"/>
        <dbReference type="EC" id="1.1.1.267"/>
    </reaction>
    <physiologicalReaction direction="right-to-left" evidence="1">
        <dbReference type="Rhea" id="RHEA:13719"/>
    </physiologicalReaction>
</comment>
<comment type="cofactor">
    <cofactor evidence="1">
        <name>Mg(2+)</name>
        <dbReference type="ChEBI" id="CHEBI:18420"/>
    </cofactor>
    <cofactor evidence="1">
        <name>Mn(2+)</name>
        <dbReference type="ChEBI" id="CHEBI:29035"/>
    </cofactor>
</comment>
<comment type="pathway">
    <text evidence="1">Isoprenoid biosynthesis; isopentenyl diphosphate biosynthesis via DXP pathway; isopentenyl diphosphate from 1-deoxy-D-xylulose 5-phosphate: step 1/6.</text>
</comment>
<comment type="similarity">
    <text evidence="1">Belongs to the DXR family.</text>
</comment>
<reference key="1">
    <citation type="submission" date="2006-12" db="EMBL/GenBank/DDBJ databases">
        <title>Complete sequence of chromosome 2 of Paracoccus denitrificans PD1222.</title>
        <authorList>
            <person name="Copeland A."/>
            <person name="Lucas S."/>
            <person name="Lapidus A."/>
            <person name="Barry K."/>
            <person name="Detter J.C."/>
            <person name="Glavina del Rio T."/>
            <person name="Hammon N."/>
            <person name="Israni S."/>
            <person name="Dalin E."/>
            <person name="Tice H."/>
            <person name="Pitluck S."/>
            <person name="Munk A.C."/>
            <person name="Brettin T."/>
            <person name="Bruce D."/>
            <person name="Han C."/>
            <person name="Tapia R."/>
            <person name="Gilna P."/>
            <person name="Schmutz J."/>
            <person name="Larimer F."/>
            <person name="Land M."/>
            <person name="Hauser L."/>
            <person name="Kyrpides N."/>
            <person name="Lykidis A."/>
            <person name="Spiro S."/>
            <person name="Richardson D.J."/>
            <person name="Moir J.W.B."/>
            <person name="Ferguson S.J."/>
            <person name="van Spanning R.J.M."/>
            <person name="Richardson P."/>
        </authorList>
    </citation>
    <scope>NUCLEOTIDE SEQUENCE [LARGE SCALE GENOMIC DNA]</scope>
    <source>
        <strain>Pd 1222</strain>
    </source>
</reference>